<evidence type="ECO:0000250" key="1">
    <source>
        <dbReference type="UniProtKB" id="A0A8C2M425"/>
    </source>
</evidence>
<evidence type="ECO:0000250" key="2">
    <source>
        <dbReference type="UniProtKB" id="Q9NUD9"/>
    </source>
</evidence>
<evidence type="ECO:0000255" key="3"/>
<evidence type="ECO:0000269" key="4">
    <source>
    </source>
</evidence>
<evidence type="ECO:0000303" key="5">
    <source>
    </source>
</evidence>
<evidence type="ECO:0000305" key="6"/>
<evidence type="ECO:0000312" key="7">
    <source>
        <dbReference type="RGD" id="1309526"/>
    </source>
</evidence>
<sequence>MGLLDPSQKEVLKFAVSCRILTLVLQALFNIIIPDHHADAFSPPRLAPSGSVDQLVEALLGGLSRWDAEHFLFIAEHGYLYEHNFAFFPGFPLALLMGTELLRPLQGLLSERSCLLVSVALLNSLFSVLAAVALHDLGCLVLHCPRQAFCAALLFCLSPANVFLAAGYSEALFAFLTFSAMGQLERGRGWASGLLFALAAGVRSNGLVSVGFLLHSQCRGFCSSLVVLDPLKGLVKLMASLCLSVLTVSLPFALFQYYAYTQFCFPGSAHAIPEPLLRLASDRGYRLAGDYEPPWCSRAPPLIYSYIQDVYWNVGLLRYYELRQVPNFLLATPVTVLVVWATWTYVTAHPWLCLTLGLQRTKDRESLEKPHPGFLSAKVFVYLVHAAALLAFGGLCMHVQVLTRLLGSSTPITYWFPAYLLQDREPLLRCVDTAPQKLLENSPPGQKAPRNCVMKLLYNWKTCSPVTKCILVYFLTYWLLGLIMHCNFLPWT</sequence>
<dbReference type="EC" id="2.4.1.-" evidence="2"/>
<dbReference type="EMBL" id="AB196341">
    <property type="protein sequence ID" value="BAD88519.1"/>
    <property type="molecule type" value="mRNA"/>
</dbReference>
<dbReference type="RefSeq" id="NP_001010966.1">
    <property type="nucleotide sequence ID" value="NM_001010966.1"/>
</dbReference>
<dbReference type="RefSeq" id="XP_006239117.1">
    <property type="nucleotide sequence ID" value="XM_006239055.5"/>
</dbReference>
<dbReference type="RefSeq" id="XP_008762381.1">
    <property type="nucleotide sequence ID" value="XM_008764159.2"/>
</dbReference>
<dbReference type="RefSeq" id="XP_017449031.1">
    <property type="nucleotide sequence ID" value="XM_017593542.1"/>
</dbReference>
<dbReference type="RefSeq" id="XP_017449032.1">
    <property type="nucleotide sequence ID" value="XM_017593543.1"/>
</dbReference>
<dbReference type="RefSeq" id="XP_017449033.1">
    <property type="nucleotide sequence ID" value="XM_017593544.3"/>
</dbReference>
<dbReference type="RefSeq" id="XP_017449034.1">
    <property type="nucleotide sequence ID" value="XM_017593545.3"/>
</dbReference>
<dbReference type="RefSeq" id="XP_038966407.1">
    <property type="nucleotide sequence ID" value="XM_039110479.2"/>
</dbReference>
<dbReference type="RefSeq" id="XP_038966408.1">
    <property type="nucleotide sequence ID" value="XM_039110480.2"/>
</dbReference>
<dbReference type="FunCoup" id="Q5KR61">
    <property type="interactions" value="1325"/>
</dbReference>
<dbReference type="STRING" id="10116.ENSRNOP00000000133"/>
<dbReference type="CAZy" id="GT76">
    <property type="family name" value="Glycosyltransferase Family 76"/>
</dbReference>
<dbReference type="PhosphoSitePlus" id="Q5KR61"/>
<dbReference type="PaxDb" id="10116-ENSRNOP00000000133"/>
<dbReference type="Ensembl" id="ENSRNOT00000000133.5">
    <property type="protein sequence ID" value="ENSRNOP00000000133.4"/>
    <property type="gene ID" value="ENSRNOG00000000121.6"/>
</dbReference>
<dbReference type="GeneID" id="366478"/>
<dbReference type="KEGG" id="rno:366478"/>
<dbReference type="UCSC" id="RGD:1309526">
    <property type="organism name" value="rat"/>
</dbReference>
<dbReference type="AGR" id="RGD:1309526"/>
<dbReference type="CTD" id="55650"/>
<dbReference type="RGD" id="1309526">
    <property type="gene designation" value="Pigv"/>
</dbReference>
<dbReference type="eggNOG" id="KOG2647">
    <property type="taxonomic scope" value="Eukaryota"/>
</dbReference>
<dbReference type="GeneTree" id="ENSGT00390000013174"/>
<dbReference type="InParanoid" id="Q5KR61"/>
<dbReference type="OrthoDB" id="68788at9989"/>
<dbReference type="PhylomeDB" id="Q5KR61"/>
<dbReference type="TreeFam" id="TF314515"/>
<dbReference type="Reactome" id="R-RNO-162710">
    <property type="pathway name" value="Synthesis of glycosylphosphatidylinositol (GPI)"/>
</dbReference>
<dbReference type="UniPathway" id="UPA00196"/>
<dbReference type="PRO" id="PR:Q5KR61"/>
<dbReference type="Proteomes" id="UP000002494">
    <property type="component" value="Chromosome 5"/>
</dbReference>
<dbReference type="Bgee" id="ENSRNOG00000000121">
    <property type="expression patterns" value="Expressed in thymus and 19 other cell types or tissues"/>
</dbReference>
<dbReference type="GO" id="GO:0005789">
    <property type="term" value="C:endoplasmic reticulum membrane"/>
    <property type="evidence" value="ECO:0000266"/>
    <property type="project" value="RGD"/>
</dbReference>
<dbReference type="GO" id="GO:0031501">
    <property type="term" value="C:mannosyltransferase complex"/>
    <property type="evidence" value="ECO:0000318"/>
    <property type="project" value="GO_Central"/>
</dbReference>
<dbReference type="GO" id="GO:0000009">
    <property type="term" value="F:alpha-1,6-mannosyltransferase activity"/>
    <property type="evidence" value="ECO:0007669"/>
    <property type="project" value="InterPro"/>
</dbReference>
<dbReference type="GO" id="GO:0004376">
    <property type="term" value="F:glycolipid mannosyltransferase activity"/>
    <property type="evidence" value="ECO:0007669"/>
    <property type="project" value="InterPro"/>
</dbReference>
<dbReference type="GO" id="GO:0000030">
    <property type="term" value="F:mannosyltransferase activity"/>
    <property type="evidence" value="ECO:0000266"/>
    <property type="project" value="RGD"/>
</dbReference>
<dbReference type="GO" id="GO:0006506">
    <property type="term" value="P:GPI anchor biosynthetic process"/>
    <property type="evidence" value="ECO:0000266"/>
    <property type="project" value="RGD"/>
</dbReference>
<dbReference type="InterPro" id="IPR007315">
    <property type="entry name" value="PIG-V/Gpi18"/>
</dbReference>
<dbReference type="PANTHER" id="PTHR12468">
    <property type="entry name" value="GPI MANNOSYLTRANSFERASE 2"/>
    <property type="match status" value="1"/>
</dbReference>
<dbReference type="PANTHER" id="PTHR12468:SF2">
    <property type="entry name" value="GPI MANNOSYLTRANSFERASE 2"/>
    <property type="match status" value="1"/>
</dbReference>
<dbReference type="Pfam" id="PF04188">
    <property type="entry name" value="Mannosyl_trans2"/>
    <property type="match status" value="1"/>
</dbReference>
<accession>Q5KR61</accession>
<gene>
    <name evidence="7" type="primary">Pigv</name>
</gene>
<reference key="1">
    <citation type="journal article" date="2005" name="J. Biol. Chem.">
        <title>PIG-V involved in transferring the second mannose in glycosylphosphatidylinositol.</title>
        <authorList>
            <person name="Kang J.Y."/>
            <person name="Hong Y."/>
            <person name="Ashida H."/>
            <person name="Shishioh N."/>
            <person name="Murakami Y."/>
            <person name="Morita Y.S."/>
            <person name="Maeda Y."/>
            <person name="Kinoshita T."/>
        </authorList>
    </citation>
    <scope>NUCLEOTIDE SEQUENCE [MRNA]</scope>
    <scope>FUNCTION</scope>
    <scope>PATHWAY</scope>
</reference>
<organism>
    <name type="scientific">Rattus norvegicus</name>
    <name type="common">Rat</name>
    <dbReference type="NCBI Taxonomy" id="10116"/>
    <lineage>
        <taxon>Eukaryota</taxon>
        <taxon>Metazoa</taxon>
        <taxon>Chordata</taxon>
        <taxon>Craniata</taxon>
        <taxon>Vertebrata</taxon>
        <taxon>Euteleostomi</taxon>
        <taxon>Mammalia</taxon>
        <taxon>Eutheria</taxon>
        <taxon>Euarchontoglires</taxon>
        <taxon>Glires</taxon>
        <taxon>Rodentia</taxon>
        <taxon>Myomorpha</taxon>
        <taxon>Muroidea</taxon>
        <taxon>Muridae</taxon>
        <taxon>Murinae</taxon>
        <taxon>Rattus</taxon>
    </lineage>
</organism>
<keyword id="KW-0256">Endoplasmic reticulum</keyword>
<keyword id="KW-0328">Glycosyltransferase</keyword>
<keyword id="KW-0337">GPI-anchor biosynthesis</keyword>
<keyword id="KW-0472">Membrane</keyword>
<keyword id="KW-1185">Reference proteome</keyword>
<keyword id="KW-0808">Transferase</keyword>
<keyword id="KW-0812">Transmembrane</keyword>
<keyword id="KW-1133">Transmembrane helix</keyword>
<feature type="chain" id="PRO_0000246236" description="GPI alpha-1,6-mannosyltransferase 2">
    <location>
        <begin position="1"/>
        <end position="492"/>
    </location>
</feature>
<feature type="topological domain" description="Cytoplasmic" evidence="2">
    <location>
        <begin position="1"/>
        <end position="13"/>
    </location>
</feature>
<feature type="transmembrane region" description="Helical" evidence="3">
    <location>
        <begin position="14"/>
        <end position="34"/>
    </location>
</feature>
<feature type="topological domain" description="Lumenal" evidence="2">
    <location>
        <begin position="35"/>
        <end position="77"/>
    </location>
</feature>
<feature type="transmembrane region" description="Helical" evidence="3">
    <location>
        <begin position="78"/>
        <end position="98"/>
    </location>
</feature>
<feature type="topological domain" description="Cytoplasmic" evidence="2">
    <location>
        <begin position="99"/>
        <end position="113"/>
    </location>
</feature>
<feature type="transmembrane region" description="Helical" evidence="3">
    <location>
        <begin position="114"/>
        <end position="134"/>
    </location>
</feature>
<feature type="topological domain" description="Lumenal" evidence="2">
    <location>
        <begin position="135"/>
        <end position="136"/>
    </location>
</feature>
<feature type="transmembrane region" description="Helical" evidence="3">
    <location>
        <begin position="137"/>
        <end position="157"/>
    </location>
</feature>
<feature type="topological domain" description="Cytoplasmic" evidence="2">
    <location>
        <begin position="158"/>
        <end position="161"/>
    </location>
</feature>
<feature type="transmembrane region" description="Helical" evidence="3">
    <location>
        <begin position="162"/>
        <end position="182"/>
    </location>
</feature>
<feature type="topological domain" description="Lumenal" evidence="2">
    <location>
        <begin position="183"/>
        <end position="192"/>
    </location>
</feature>
<feature type="transmembrane region" description="Helical" evidence="3">
    <location>
        <begin position="193"/>
        <end position="213"/>
    </location>
</feature>
<feature type="topological domain" description="Cytoplasmic" evidence="2">
    <location>
        <begin position="214"/>
        <end position="234"/>
    </location>
</feature>
<feature type="transmembrane region" description="Helical" evidence="3">
    <location>
        <begin position="235"/>
        <end position="255"/>
    </location>
</feature>
<feature type="topological domain" description="Lumenal" evidence="2 3">
    <location>
        <begin position="256"/>
        <end position="327"/>
    </location>
</feature>
<feature type="transmembrane region" description="Helical" evidence="3">
    <location>
        <begin position="328"/>
        <end position="348"/>
    </location>
</feature>
<feature type="topological domain" description="Cytoplasmic" evidence="2">
    <location>
        <begin position="349"/>
        <end position="378"/>
    </location>
</feature>
<feature type="transmembrane region" description="Helical" evidence="3">
    <location>
        <begin position="379"/>
        <end position="399"/>
    </location>
</feature>
<feature type="topological domain" description="Lumenal" evidence="2">
    <location>
        <begin position="400"/>
        <end position="468"/>
    </location>
</feature>
<feature type="transmembrane region" description="Helical" evidence="3">
    <location>
        <begin position="469"/>
        <end position="489"/>
    </location>
</feature>
<feature type="topological domain" description="Cytoplasmic" evidence="2">
    <location>
        <begin position="490"/>
        <end position="492"/>
    </location>
</feature>
<proteinExistence type="evidence at transcript level"/>
<comment type="function">
    <text evidence="1 4">Alpha-1,6-mannosyltransferase that catalyzes the transfer of the second mannose, via an alpha-1,6 bond, from a dolichol-phosphate-mannose (Dol-P-Man) to the alpha-D-Man-(1-&gt;4)-alpha-D-GlcN-(1-&gt;6)-(1-radyl,2-acyl-sn-glycero-3-phospho)-2-acyl-inositol (also termed H2) intermediate to generate an alpha-D-Man-(1-&gt;6)-alpha-D-Man-(1-&gt;4)-alpha-D-GlcN-(1-&gt;6)-(1-radyl,2-acyl-sn-glycero-3-phospho)-2-acyl-inositol (also termed H3) and participates in the seventh step of the glycosylphosphatidylinositol-anchor biosynthesis (PubMed:15623507). Also transfers the second mannose on a 2-PEtn-alpha-D-Man-(1-&gt;4)-alpha-D-GlcN-(1-&gt;6)-(1-radyl,2-acyl-sn-glycero-3-phospho)-2-acyl-inositol (also termed H5) (By similarity).</text>
</comment>
<comment type="pathway">
    <text evidence="4">Glycolipid biosynthesis; glycosylphosphatidylinositol-anchor biosynthesis.</text>
</comment>
<comment type="subcellular location">
    <subcellularLocation>
        <location evidence="2">Endoplasmic reticulum membrane</location>
        <topology evidence="2">Multi-pass membrane protein</topology>
    </subcellularLocation>
</comment>
<comment type="PTM">
    <text evidence="2">Not N-glycosylated.</text>
</comment>
<comment type="similarity">
    <text evidence="6">Belongs to the PIGV family.</text>
</comment>
<protein>
    <recommendedName>
        <fullName evidence="6">GPI alpha-1,6-mannosyltransferase 2</fullName>
        <ecNumber evidence="2">2.4.1.-</ecNumber>
    </recommendedName>
    <alternativeName>
        <fullName>GPI mannosyltransferase II</fullName>
        <shortName evidence="2">GPI-MT-II</shortName>
    </alternativeName>
    <alternativeName>
        <fullName evidence="5">Phosphatidylinositol-glycan biosynthesis class V protein</fullName>
        <shortName evidence="5">PIG-V</shortName>
    </alternativeName>
</protein>
<name>PIGV_RAT</name>